<dbReference type="EMBL" id="L25528">
    <property type="protein sequence ID" value="AAA16730.1"/>
    <property type="status" value="ALT_INIT"/>
    <property type="molecule type" value="Genomic_DNA"/>
</dbReference>
<dbReference type="EMBL" id="X83413">
    <property type="protein sequence ID" value="CAA58403.1"/>
    <property type="molecule type" value="Genomic_DNA"/>
</dbReference>
<dbReference type="PIR" id="T09317">
    <property type="entry name" value="T09317"/>
</dbReference>
<dbReference type="RefSeq" id="NP_042916.1">
    <property type="nucleotide sequence ID" value="NC_001664.2"/>
</dbReference>
<dbReference type="SMR" id="Q69558"/>
<dbReference type="GlyCosmos" id="Q69558">
    <property type="glycosylation" value="3 sites, No reported glycans"/>
</dbReference>
<dbReference type="DNASU" id="1487989"/>
<dbReference type="GeneID" id="1487989"/>
<dbReference type="KEGG" id="vg:1487989"/>
<dbReference type="Proteomes" id="UP000009295">
    <property type="component" value="Segment"/>
</dbReference>
<dbReference type="GO" id="GO:0016020">
    <property type="term" value="C:membrane"/>
    <property type="evidence" value="ECO:0007669"/>
    <property type="project" value="UniProtKB-SubCell"/>
</dbReference>
<organism>
    <name type="scientific">Human herpesvirus 6A (strain Uganda-1102)</name>
    <name type="common">HHV-6 variant A</name>
    <name type="synonym">Human B lymphotropic virus</name>
    <dbReference type="NCBI Taxonomy" id="10370"/>
    <lineage>
        <taxon>Viruses</taxon>
        <taxon>Duplodnaviria</taxon>
        <taxon>Heunggongvirae</taxon>
        <taxon>Peploviricota</taxon>
        <taxon>Herviviricetes</taxon>
        <taxon>Herpesvirales</taxon>
        <taxon>Orthoherpesviridae</taxon>
        <taxon>Betaherpesvirinae</taxon>
        <taxon>Roseolovirus</taxon>
        <taxon>Roseolovirus humanbeta6a</taxon>
        <taxon>Human betaherpesvirus 6A</taxon>
    </lineage>
</organism>
<comment type="subcellular location">
    <subcellularLocation>
        <location evidence="2">Membrane</location>
        <topology evidence="2">Single-pass membrane protein</topology>
    </subcellularLocation>
</comment>
<comment type="sequence caution" evidence="2">
    <conflict type="erroneous initiation">
        <sequence resource="EMBL-CDS" id="AAA16730"/>
    </conflict>
    <text>Extended N-terminus.</text>
</comment>
<reference key="1">
    <citation type="journal article" date="1994" name="J. Virol.">
        <title>Nucleotide sequence analysis of a 38.5-kilobase-pair region of the genome of human herpesvirus 6 encoding human cytomegalovirus immediate-early gene homologs and transactivating functions.</title>
        <authorList>
            <person name="Nicholas J."/>
            <person name="Martin M.E.D."/>
        </authorList>
    </citation>
    <scope>NUCLEOTIDE SEQUENCE [GENOMIC DNA]</scope>
</reference>
<reference key="2">
    <citation type="journal article" date="1995" name="Virology">
        <title>The DNA sequence of human herpesvirus-6: structure, coding content, and genome evolution.</title>
        <authorList>
            <person name="Gompels U.A."/>
            <person name="Nicholas J."/>
            <person name="Lawrence G.L."/>
            <person name="Jones M."/>
            <person name="Thomson B.J."/>
            <person name="Martin M.E.D."/>
            <person name="Efstathiou S."/>
            <person name="Craxton M.A."/>
            <person name="Macaulay H.A."/>
        </authorList>
    </citation>
    <scope>NUCLEOTIDE SEQUENCE [LARGE SCALE GENOMIC DNA]</scope>
</reference>
<evidence type="ECO:0000255" key="1"/>
<evidence type="ECO:0000305" key="2"/>
<sequence length="236" mass="26523">MLFLSFLLVCLCEEVRMLNLMTTEVSATEFASIASKNMETDVSTSSDYLTGKSETTFSANSETWGKNVTEISIDSETYLNQSFMVTSTLAVETTDRSIGNNVNVTSSFPTVKGDETQNIETSFTVISASTFSDVSEKTPQGLSTKSTPKKTVQALWETDTVQVLEFTDTHEGDEEYFKDFLSSLVIWIGGISFIGAFVILIVILCNWYKKDKQRSLFWDEEKKPDVQMRRDVKTCR</sequence>
<gene>
    <name type="primary">U23</name>
    <name type="synonym">EqLF1</name>
</gene>
<feature type="signal peptide" evidence="1">
    <location>
        <begin position="1"/>
        <end position="17"/>
    </location>
</feature>
<feature type="chain" id="PRO_0000342578" description="Glycoprotein U23">
    <location>
        <begin position="18"/>
        <end position="236"/>
    </location>
</feature>
<feature type="transmembrane region" description="Helical" evidence="1">
    <location>
        <begin position="184"/>
        <end position="204"/>
    </location>
</feature>
<feature type="glycosylation site" description="N-linked (GlcNAc...) asparagine; by host" evidence="1">
    <location>
        <position position="67"/>
    </location>
</feature>
<feature type="glycosylation site" description="N-linked (GlcNAc...) asparagine; by host" evidence="1">
    <location>
        <position position="80"/>
    </location>
</feature>
<feature type="glycosylation site" description="N-linked (GlcNAc...) asparagine; by host" evidence="1">
    <location>
        <position position="103"/>
    </location>
</feature>
<organismHost>
    <name type="scientific">Homo sapiens</name>
    <name type="common">Human</name>
    <dbReference type="NCBI Taxonomy" id="9606"/>
</organismHost>
<name>U23_HHV6U</name>
<keyword id="KW-0325">Glycoprotein</keyword>
<keyword id="KW-0472">Membrane</keyword>
<keyword id="KW-1185">Reference proteome</keyword>
<keyword id="KW-0732">Signal</keyword>
<keyword id="KW-0812">Transmembrane</keyword>
<keyword id="KW-1133">Transmembrane helix</keyword>
<proteinExistence type="inferred from homology"/>
<accession>Q69558</accession>
<accession>Q69047</accession>
<protein>
    <recommendedName>
        <fullName>Glycoprotein U23</fullName>
    </recommendedName>
</protein>